<dbReference type="EC" id="3.6.1.9" evidence="1"/>
<dbReference type="EMBL" id="CP000031">
    <property type="protein sequence ID" value="AAV97106.1"/>
    <property type="molecule type" value="Genomic_DNA"/>
</dbReference>
<dbReference type="RefSeq" id="WP_011049563.1">
    <property type="nucleotide sequence ID" value="NC_003911.12"/>
</dbReference>
<dbReference type="SMR" id="Q5LLN0"/>
<dbReference type="STRING" id="246200.SPO3892"/>
<dbReference type="PaxDb" id="246200-SPO3892"/>
<dbReference type="KEGG" id="sil:SPO3892"/>
<dbReference type="eggNOG" id="COG0424">
    <property type="taxonomic scope" value="Bacteria"/>
</dbReference>
<dbReference type="HOGENOM" id="CLU_040416_1_1_5"/>
<dbReference type="OrthoDB" id="9813962at2"/>
<dbReference type="Proteomes" id="UP000001023">
    <property type="component" value="Chromosome"/>
</dbReference>
<dbReference type="GO" id="GO:0005737">
    <property type="term" value="C:cytoplasm"/>
    <property type="evidence" value="ECO:0007669"/>
    <property type="project" value="UniProtKB-SubCell"/>
</dbReference>
<dbReference type="GO" id="GO:0047429">
    <property type="term" value="F:nucleoside triphosphate diphosphatase activity"/>
    <property type="evidence" value="ECO:0007669"/>
    <property type="project" value="UniProtKB-EC"/>
</dbReference>
<dbReference type="GO" id="GO:0009117">
    <property type="term" value="P:nucleotide metabolic process"/>
    <property type="evidence" value="ECO:0007669"/>
    <property type="project" value="UniProtKB-KW"/>
</dbReference>
<dbReference type="CDD" id="cd00555">
    <property type="entry name" value="Maf"/>
    <property type="match status" value="1"/>
</dbReference>
<dbReference type="Gene3D" id="3.90.950.10">
    <property type="match status" value="1"/>
</dbReference>
<dbReference type="HAMAP" id="MF_00528">
    <property type="entry name" value="Maf"/>
    <property type="match status" value="1"/>
</dbReference>
<dbReference type="InterPro" id="IPR029001">
    <property type="entry name" value="ITPase-like_fam"/>
</dbReference>
<dbReference type="InterPro" id="IPR003697">
    <property type="entry name" value="Maf-like"/>
</dbReference>
<dbReference type="NCBIfam" id="TIGR00172">
    <property type="entry name" value="maf"/>
    <property type="match status" value="1"/>
</dbReference>
<dbReference type="PANTHER" id="PTHR43213">
    <property type="entry name" value="BIFUNCTIONAL DTTP/UTP PYROPHOSPHATASE/METHYLTRANSFERASE PROTEIN-RELATED"/>
    <property type="match status" value="1"/>
</dbReference>
<dbReference type="PANTHER" id="PTHR43213:SF5">
    <property type="entry name" value="BIFUNCTIONAL DTTP_UTP PYROPHOSPHATASE_METHYLTRANSFERASE PROTEIN-RELATED"/>
    <property type="match status" value="1"/>
</dbReference>
<dbReference type="Pfam" id="PF02545">
    <property type="entry name" value="Maf"/>
    <property type="match status" value="1"/>
</dbReference>
<dbReference type="PIRSF" id="PIRSF006305">
    <property type="entry name" value="Maf"/>
    <property type="match status" value="1"/>
</dbReference>
<dbReference type="SUPFAM" id="SSF52972">
    <property type="entry name" value="ITPase-like"/>
    <property type="match status" value="1"/>
</dbReference>
<keyword id="KW-0963">Cytoplasm</keyword>
<keyword id="KW-0378">Hydrolase</keyword>
<keyword id="KW-0546">Nucleotide metabolism</keyword>
<keyword id="KW-1185">Reference proteome</keyword>
<protein>
    <recommendedName>
        <fullName evidence="1">Nucleoside triphosphate pyrophosphatase</fullName>
        <ecNumber evidence="1">3.6.1.9</ecNumber>
    </recommendedName>
    <alternativeName>
        <fullName evidence="1">Nucleotide pyrophosphatase</fullName>
        <shortName evidence="1">Nucleotide PPase</shortName>
    </alternativeName>
</protein>
<gene>
    <name type="ordered locus">SPO3892</name>
</gene>
<reference key="1">
    <citation type="journal article" date="2004" name="Nature">
        <title>Genome sequence of Silicibacter pomeroyi reveals adaptations to the marine environment.</title>
        <authorList>
            <person name="Moran M.A."/>
            <person name="Buchan A."/>
            <person name="Gonzalez J.M."/>
            <person name="Heidelberg J.F."/>
            <person name="Whitman W.B."/>
            <person name="Kiene R.P."/>
            <person name="Henriksen J.R."/>
            <person name="King G.M."/>
            <person name="Belas R."/>
            <person name="Fuqua C."/>
            <person name="Brinkac L.M."/>
            <person name="Lewis M."/>
            <person name="Johri S."/>
            <person name="Weaver B."/>
            <person name="Pai G."/>
            <person name="Eisen J.A."/>
            <person name="Rahe E."/>
            <person name="Sheldon W.M."/>
            <person name="Ye W."/>
            <person name="Miller T.R."/>
            <person name="Carlton J."/>
            <person name="Rasko D.A."/>
            <person name="Paulsen I.T."/>
            <person name="Ren Q."/>
            <person name="Daugherty S.C."/>
            <person name="DeBoy R.T."/>
            <person name="Dodson R.J."/>
            <person name="Durkin A.S."/>
            <person name="Madupu R."/>
            <person name="Nelson W.C."/>
            <person name="Sullivan S.A."/>
            <person name="Rosovitz M.J."/>
            <person name="Haft D.H."/>
            <person name="Selengut J."/>
            <person name="Ward N."/>
        </authorList>
    </citation>
    <scope>NUCLEOTIDE SEQUENCE [LARGE SCALE GENOMIC DNA]</scope>
    <source>
        <strain>ATCC 700808 / DSM 15171 / DSS-3</strain>
    </source>
</reference>
<reference key="2">
    <citation type="journal article" date="2014" name="Stand. Genomic Sci.">
        <title>An updated genome annotation for the model marine bacterium Ruegeria pomeroyi DSS-3.</title>
        <authorList>
            <person name="Rivers A.R."/>
            <person name="Smith C.B."/>
            <person name="Moran M.A."/>
        </authorList>
    </citation>
    <scope>GENOME REANNOTATION</scope>
    <source>
        <strain>ATCC 700808 / DSM 15171 / DSS-3</strain>
    </source>
</reference>
<evidence type="ECO:0000255" key="1">
    <source>
        <dbReference type="HAMAP-Rule" id="MF_00528"/>
    </source>
</evidence>
<name>NTPP_RUEPO</name>
<accession>Q5LLN0</accession>
<organism>
    <name type="scientific">Ruegeria pomeroyi (strain ATCC 700808 / DSM 15171 / DSS-3)</name>
    <name type="common">Silicibacter pomeroyi</name>
    <dbReference type="NCBI Taxonomy" id="246200"/>
    <lineage>
        <taxon>Bacteria</taxon>
        <taxon>Pseudomonadati</taxon>
        <taxon>Pseudomonadota</taxon>
        <taxon>Alphaproteobacteria</taxon>
        <taxon>Rhodobacterales</taxon>
        <taxon>Roseobacteraceae</taxon>
        <taxon>Ruegeria</taxon>
    </lineage>
</organism>
<feature type="chain" id="PRO_0000267436" description="Nucleoside triphosphate pyrophosphatase">
    <location>
        <begin position="1"/>
        <end position="199"/>
    </location>
</feature>
<feature type="active site" description="Proton acceptor" evidence="1">
    <location>
        <position position="76"/>
    </location>
</feature>
<proteinExistence type="inferred from homology"/>
<comment type="function">
    <text evidence="1">Nucleoside triphosphate pyrophosphatase. May have a dual role in cell division arrest and in preventing the incorporation of modified nucleotides into cellular nucleic acids.</text>
</comment>
<comment type="catalytic activity">
    <reaction evidence="1">
        <text>a ribonucleoside 5'-triphosphate + H2O = a ribonucleoside 5'-phosphate + diphosphate + H(+)</text>
        <dbReference type="Rhea" id="RHEA:23996"/>
        <dbReference type="ChEBI" id="CHEBI:15377"/>
        <dbReference type="ChEBI" id="CHEBI:15378"/>
        <dbReference type="ChEBI" id="CHEBI:33019"/>
        <dbReference type="ChEBI" id="CHEBI:58043"/>
        <dbReference type="ChEBI" id="CHEBI:61557"/>
        <dbReference type="EC" id="3.6.1.9"/>
    </reaction>
</comment>
<comment type="catalytic activity">
    <reaction evidence="1">
        <text>a 2'-deoxyribonucleoside 5'-triphosphate + H2O = a 2'-deoxyribonucleoside 5'-phosphate + diphosphate + H(+)</text>
        <dbReference type="Rhea" id="RHEA:44644"/>
        <dbReference type="ChEBI" id="CHEBI:15377"/>
        <dbReference type="ChEBI" id="CHEBI:15378"/>
        <dbReference type="ChEBI" id="CHEBI:33019"/>
        <dbReference type="ChEBI" id="CHEBI:61560"/>
        <dbReference type="ChEBI" id="CHEBI:65317"/>
        <dbReference type="EC" id="3.6.1.9"/>
    </reaction>
</comment>
<comment type="cofactor">
    <cofactor evidence="1">
        <name>a divalent metal cation</name>
        <dbReference type="ChEBI" id="CHEBI:60240"/>
    </cofactor>
</comment>
<comment type="subcellular location">
    <subcellularLocation>
        <location evidence="1">Cytoplasm</location>
    </subcellularLocation>
</comment>
<comment type="similarity">
    <text evidence="1">Belongs to the Maf family.</text>
</comment>
<sequence>MTVPLILASGSAIRAQLLENAAVPFTKDVPRVDEESVKAALLAESAPPRDIADALAEMKARKISDKHPGAMVLGCDQVLDFQGRLLSKPDSPETALAELKQMSGQRHMLLSAAVIYENGQPVWRHVGQVRLRMRALSDSYLSGYVARNWDSIRHAVGGYKLEEEGVRLFSTIDGDHFNVLGMPLLELLNFLALRGVIDT</sequence>